<protein>
    <recommendedName>
        <fullName evidence="2">Conotoxin Ama1245</fullName>
    </recommendedName>
    <component>
        <recommendedName>
            <fullName evidence="2">Conotoxin Ama1158</fullName>
        </recommendedName>
    </component>
</protein>
<organism>
    <name type="scientific">Conus amadis</name>
    <name type="common">Amadis cone</name>
    <dbReference type="NCBI Taxonomy" id="198732"/>
    <lineage>
        <taxon>Eukaryota</taxon>
        <taxon>Metazoa</taxon>
        <taxon>Spiralia</taxon>
        <taxon>Lophotrochozoa</taxon>
        <taxon>Mollusca</taxon>
        <taxon>Gastropoda</taxon>
        <taxon>Caenogastropoda</taxon>
        <taxon>Neogastropoda</taxon>
        <taxon>Conoidea</taxon>
        <taxon>Conidae</taxon>
        <taxon>Conus</taxon>
        <taxon>Leptoconus</taxon>
    </lineage>
</organism>
<reference key="1">
    <citation type="journal article" date="2019" name="Protein Pept. Lett.">
        <title>Proteome based de novo sequencing of novel conotoxins from marine molluscivorous cone snail Conus amadis and neurological activities of its natural venom in zebrafish model.</title>
        <authorList>
            <person name="Rajesh R.P."/>
            <person name="Franklin J.B."/>
            <person name="Badsha I."/>
            <person name="Arjun P."/>
            <person name="Jain R.P."/>
            <person name="Vignesh M.S."/>
            <person name="Kannan R.R."/>
        </authorList>
    </citation>
    <scope>PROTEIN SEQUENCE</scope>
    <scope>SUBCELLULAR LOCATION</scope>
    <scope>MASS SPECTROMETRY</scope>
    <scope>HYDROXYLATION AT PRO-10</scope>
    <scope>AMIDATION AT CYS-11</scope>
    <source>
        <tissue>Venom</tissue>
    </source>
</reference>
<sequence length="11" mass="1234">SQCCYQICSPC</sequence>
<proteinExistence type="evidence at protein level"/>
<comment type="function">
    <text evidence="3">Probable toxin that inhibits ion channels.</text>
</comment>
<comment type="subcellular location">
    <subcellularLocation>
        <location evidence="1">Secreted</location>
    </subcellularLocation>
</comment>
<comment type="tissue specificity">
    <text evidence="4">Expressed by the venom duct.</text>
</comment>
<comment type="domain">
    <text>The cysteine framework is I (CC-C-C). Alpha3/2 pattern.</text>
</comment>
<comment type="PTM">
    <text evidence="1">Contains 2 disulfide bonds.</text>
</comment>
<comment type="mass spectrometry" mass="1158.5" method="MALDI" evidence="1">
    <molecule>Conotoxin Ama1158</molecule>
</comment>
<comment type="mass spectrometry" mass="1245.5" method="MALDI" evidence="1">
    <molecule>Conotoxin Ama1245</molecule>
</comment>
<feature type="peptide" id="PRO_0000453583" description="Conotoxin Ama1245" evidence="1">
    <location>
        <begin position="1"/>
        <end position="11"/>
    </location>
</feature>
<feature type="peptide" id="PRO_0000453584" description="Conotoxin Ama1158" evidence="1">
    <location>
        <begin position="2"/>
        <end position="11"/>
    </location>
</feature>
<feature type="modified residue" description="4-hydroxyproline; in Ama1158 and Ama1245" evidence="1">
    <location>
        <position position="10"/>
    </location>
</feature>
<feature type="modified residue" description="Cysteine amide; in Ama1158 and Ama1245" evidence="1">
    <location>
        <position position="11"/>
    </location>
</feature>
<feature type="unsure residue" description="Q or K" evidence="4">
    <location>
        <position position="2"/>
    </location>
</feature>
<feature type="unsure residue" description="Q or K" evidence="4">
    <location>
        <position position="6"/>
    </location>
</feature>
<feature type="unsure residue" description="I or L" evidence="4">
    <location>
        <position position="7"/>
    </location>
</feature>
<keyword id="KW-0027">Amidation</keyword>
<keyword id="KW-0903">Direct protein sequencing</keyword>
<keyword id="KW-1015">Disulfide bond</keyword>
<keyword id="KW-0379">Hydroxylation</keyword>
<keyword id="KW-0872">Ion channel impairing toxin</keyword>
<keyword id="KW-0964">Secreted</keyword>
<keyword id="KW-0800">Toxin</keyword>
<evidence type="ECO:0000269" key="1">
    <source>
    </source>
</evidence>
<evidence type="ECO:0000303" key="2">
    <source>
    </source>
</evidence>
<evidence type="ECO:0000305" key="3"/>
<evidence type="ECO:0000305" key="4">
    <source>
    </source>
</evidence>
<accession>P0DUU4</accession>
<name>A1245_CONAA</name>
<dbReference type="GO" id="GO:0005576">
    <property type="term" value="C:extracellular region"/>
    <property type="evidence" value="ECO:0007669"/>
    <property type="project" value="UniProtKB-SubCell"/>
</dbReference>
<dbReference type="GO" id="GO:0099106">
    <property type="term" value="F:ion channel regulator activity"/>
    <property type="evidence" value="ECO:0007669"/>
    <property type="project" value="UniProtKB-KW"/>
</dbReference>
<dbReference type="GO" id="GO:0090729">
    <property type="term" value="F:toxin activity"/>
    <property type="evidence" value="ECO:0007669"/>
    <property type="project" value="UniProtKB-KW"/>
</dbReference>